<keyword id="KW-0472">Membrane</keyword>
<keyword id="KW-1185">Reference proteome</keyword>
<organism>
    <name type="scientific">Candida glabrata (strain ATCC 2001 / BCRC 20586 / JCM 3761 / NBRC 0622 / NRRL Y-65 / CBS 138)</name>
    <name type="common">Yeast</name>
    <name type="synonym">Nakaseomyces glabratus</name>
    <dbReference type="NCBI Taxonomy" id="284593"/>
    <lineage>
        <taxon>Eukaryota</taxon>
        <taxon>Fungi</taxon>
        <taxon>Dikarya</taxon>
        <taxon>Ascomycota</taxon>
        <taxon>Saccharomycotina</taxon>
        <taxon>Saccharomycetes</taxon>
        <taxon>Saccharomycetales</taxon>
        <taxon>Saccharomycetaceae</taxon>
        <taxon>Nakaseomyces</taxon>
    </lineage>
</organism>
<comment type="subcellular location">
    <subcellularLocation>
        <location evidence="1">Membrane raft</location>
        <topology evidence="1">Peripheral membrane protein</topology>
    </subcellularLocation>
    <text evidence="1">Localizes within detergent-insoluble glycolipid-enriched membranes.</text>
</comment>
<comment type="similarity">
    <text evidence="3">Belongs to the AIM3 family.</text>
</comment>
<dbReference type="EMBL" id="CR380957">
    <property type="protein sequence ID" value="CAG61714.1"/>
    <property type="molecule type" value="Genomic_DNA"/>
</dbReference>
<dbReference type="RefSeq" id="XP_448751.1">
    <property type="nucleotide sequence ID" value="XM_448751.1"/>
</dbReference>
<dbReference type="SMR" id="Q6FLZ3"/>
<dbReference type="FunCoup" id="Q6FLZ3">
    <property type="interactions" value="54"/>
</dbReference>
<dbReference type="STRING" id="284593.Q6FLZ3"/>
<dbReference type="EnsemblFungi" id="CAGL0K12320g-T">
    <property type="protein sequence ID" value="CAGL0K12320g-T-p1"/>
    <property type="gene ID" value="CAGL0K12320g"/>
</dbReference>
<dbReference type="KEGG" id="cgr:2889980"/>
<dbReference type="CGD" id="CAL0134095">
    <property type="gene designation" value="CAGL0K12320g"/>
</dbReference>
<dbReference type="VEuPathDB" id="FungiDB:CAGL0K12320g"/>
<dbReference type="eggNOG" id="ENOG502S02E">
    <property type="taxonomic scope" value="Eukaryota"/>
</dbReference>
<dbReference type="HOGENOM" id="CLU_432781_0_0_1"/>
<dbReference type="InParanoid" id="Q6FLZ3"/>
<dbReference type="OMA" id="DNPFRRY"/>
<dbReference type="Proteomes" id="UP000002428">
    <property type="component" value="Chromosome K"/>
</dbReference>
<dbReference type="GO" id="GO:0030479">
    <property type="term" value="C:actin cortical patch"/>
    <property type="evidence" value="ECO:0007669"/>
    <property type="project" value="InterPro"/>
</dbReference>
<dbReference type="GO" id="GO:0045121">
    <property type="term" value="C:membrane raft"/>
    <property type="evidence" value="ECO:0007669"/>
    <property type="project" value="UniProtKB-SubCell"/>
</dbReference>
<dbReference type="GO" id="GO:0051016">
    <property type="term" value="P:barbed-end actin filament capping"/>
    <property type="evidence" value="ECO:0007669"/>
    <property type="project" value="InterPro"/>
</dbReference>
<dbReference type="InterPro" id="IPR031370">
    <property type="entry name" value="Aim3"/>
</dbReference>
<dbReference type="Pfam" id="PF17096">
    <property type="entry name" value="AIM3"/>
    <property type="match status" value="1"/>
</dbReference>
<gene>
    <name type="primary">AIM3-2</name>
    <name type="ordered locus">CAGL0K12320g</name>
</gene>
<name>AIM3B_CANGA</name>
<proteinExistence type="inferred from homology"/>
<feature type="chain" id="PRO_0000399599" description="Altered inheritance of mitochondria protein 3-2">
    <location>
        <begin position="1"/>
        <end position="785"/>
    </location>
</feature>
<feature type="region of interest" description="Disordered" evidence="2">
    <location>
        <begin position="33"/>
        <end position="122"/>
    </location>
</feature>
<feature type="region of interest" description="Disordered" evidence="2">
    <location>
        <begin position="142"/>
        <end position="406"/>
    </location>
</feature>
<feature type="region of interest" description="Disordered" evidence="2">
    <location>
        <begin position="418"/>
        <end position="785"/>
    </location>
</feature>
<feature type="compositionally biased region" description="Low complexity" evidence="2">
    <location>
        <begin position="91"/>
        <end position="102"/>
    </location>
</feature>
<feature type="compositionally biased region" description="Polar residues" evidence="2">
    <location>
        <begin position="103"/>
        <end position="122"/>
    </location>
</feature>
<feature type="compositionally biased region" description="Polar residues" evidence="2">
    <location>
        <begin position="143"/>
        <end position="199"/>
    </location>
</feature>
<feature type="compositionally biased region" description="Basic and acidic residues" evidence="2">
    <location>
        <begin position="249"/>
        <end position="260"/>
    </location>
</feature>
<feature type="compositionally biased region" description="Polar residues" evidence="2">
    <location>
        <begin position="283"/>
        <end position="310"/>
    </location>
</feature>
<feature type="compositionally biased region" description="Polar residues" evidence="2">
    <location>
        <begin position="350"/>
        <end position="366"/>
    </location>
</feature>
<feature type="compositionally biased region" description="Polar residues" evidence="2">
    <location>
        <begin position="375"/>
        <end position="388"/>
    </location>
</feature>
<feature type="compositionally biased region" description="Polar residues" evidence="2">
    <location>
        <begin position="395"/>
        <end position="405"/>
    </location>
</feature>
<feature type="compositionally biased region" description="Polar residues" evidence="2">
    <location>
        <begin position="455"/>
        <end position="465"/>
    </location>
</feature>
<feature type="compositionally biased region" description="Basic and acidic residues" evidence="2">
    <location>
        <begin position="478"/>
        <end position="497"/>
    </location>
</feature>
<feature type="compositionally biased region" description="Polar residues" evidence="2">
    <location>
        <begin position="527"/>
        <end position="556"/>
    </location>
</feature>
<feature type="compositionally biased region" description="Basic and acidic residues" evidence="2">
    <location>
        <begin position="587"/>
        <end position="613"/>
    </location>
</feature>
<feature type="compositionally biased region" description="Basic and acidic residues" evidence="2">
    <location>
        <begin position="624"/>
        <end position="637"/>
    </location>
</feature>
<feature type="compositionally biased region" description="Polar residues" evidence="2">
    <location>
        <begin position="659"/>
        <end position="671"/>
    </location>
</feature>
<feature type="compositionally biased region" description="Basic and acidic residues" evidence="2">
    <location>
        <begin position="672"/>
        <end position="686"/>
    </location>
</feature>
<feature type="compositionally biased region" description="Basic and acidic residues" evidence="2">
    <location>
        <begin position="700"/>
        <end position="710"/>
    </location>
</feature>
<accession>Q6FLZ3</accession>
<protein>
    <recommendedName>
        <fullName>Altered inheritance of mitochondria protein 3-2</fullName>
    </recommendedName>
</protein>
<evidence type="ECO:0000250" key="1"/>
<evidence type="ECO:0000256" key="2">
    <source>
        <dbReference type="SAM" id="MobiDB-lite"/>
    </source>
</evidence>
<evidence type="ECO:0000305" key="3"/>
<sequence>MSEFWNNNKDTIGAGLKTVGKYSYKSTKFVAKTGYQAGKSHYQNSKAKREGRSQEGSDDSGQTTPNVHINYKDPSAFPPPPVKPGQLQYHGSSGNSANGSSATIPTLSNTNNTAQLNEQPYMNQINSSNQIYSRPQMAIPEQQVATPEQQMNSTTLPSQPQMAVPSQQEHIHIQPSNPQQLPSNYKPQEQYLQSEQLNISDRHAPQPMERPAMPLPQHGNVPPLTTENVHPNIEADISSPAVGPQFEVKPYDWEEQKTTKIEIPQVDLTSIPPPPTHRDRNTSRQGSNSTPPSRTHTGNNTSTASVTTTGIVDGNLESNQEHTPKPAILGEYDDTLNVAYAPPPKPFRRATNNSSDLKLSGAQNTKTPPPPVVLTNKSAERPNSSNVMPSLPLRQMNTKANSSENLPKAKILGEYETNVDVGIAPPPRPTYRKTDTEANPPNRPLSRSTTEHKMSSISRDNYNSIKSSSVKPPVPKRNTGEREGAQELKADIAERSQEITPTPGISGIYNLDKKIDFAPPPKPFRRAQTSSDIPQKSSLVTDESNISVPNKSQQPMQEKDSIKNATPLYIPPSNNINFPPPPKPHNKSLEESHTPSNKLSEKPKPPKKPEQLKDLNLSTQQADKNMKNKDQLFDNKNELLSTIKNKKRPAPIPKPKPKSLTSEGNHMNLNTEKGKETTIEKPDESKFLPISSFPPPPKPFKREELSKEVVDSVGETADFTKPKRAGQLESTQTEKSNSKGKAPPPVPKKRNAQSKSSPSLEGSEDNPFSKYLKDAVPNEPDRLHK</sequence>
<reference key="1">
    <citation type="journal article" date="2004" name="Nature">
        <title>Genome evolution in yeasts.</title>
        <authorList>
            <person name="Dujon B."/>
            <person name="Sherman D."/>
            <person name="Fischer G."/>
            <person name="Durrens P."/>
            <person name="Casaregola S."/>
            <person name="Lafontaine I."/>
            <person name="de Montigny J."/>
            <person name="Marck C."/>
            <person name="Neuveglise C."/>
            <person name="Talla E."/>
            <person name="Goffard N."/>
            <person name="Frangeul L."/>
            <person name="Aigle M."/>
            <person name="Anthouard V."/>
            <person name="Babour A."/>
            <person name="Barbe V."/>
            <person name="Barnay S."/>
            <person name="Blanchin S."/>
            <person name="Beckerich J.-M."/>
            <person name="Beyne E."/>
            <person name="Bleykasten C."/>
            <person name="Boisrame A."/>
            <person name="Boyer J."/>
            <person name="Cattolico L."/>
            <person name="Confanioleri F."/>
            <person name="de Daruvar A."/>
            <person name="Despons L."/>
            <person name="Fabre E."/>
            <person name="Fairhead C."/>
            <person name="Ferry-Dumazet H."/>
            <person name="Groppi A."/>
            <person name="Hantraye F."/>
            <person name="Hennequin C."/>
            <person name="Jauniaux N."/>
            <person name="Joyet P."/>
            <person name="Kachouri R."/>
            <person name="Kerrest A."/>
            <person name="Koszul R."/>
            <person name="Lemaire M."/>
            <person name="Lesur I."/>
            <person name="Ma L."/>
            <person name="Muller H."/>
            <person name="Nicaud J.-M."/>
            <person name="Nikolski M."/>
            <person name="Oztas S."/>
            <person name="Ozier-Kalogeropoulos O."/>
            <person name="Pellenz S."/>
            <person name="Potier S."/>
            <person name="Richard G.-F."/>
            <person name="Straub M.-L."/>
            <person name="Suleau A."/>
            <person name="Swennen D."/>
            <person name="Tekaia F."/>
            <person name="Wesolowski-Louvel M."/>
            <person name="Westhof E."/>
            <person name="Wirth B."/>
            <person name="Zeniou-Meyer M."/>
            <person name="Zivanovic Y."/>
            <person name="Bolotin-Fukuhara M."/>
            <person name="Thierry A."/>
            <person name="Bouchier C."/>
            <person name="Caudron B."/>
            <person name="Scarpelli C."/>
            <person name="Gaillardin C."/>
            <person name="Weissenbach J."/>
            <person name="Wincker P."/>
            <person name="Souciet J.-L."/>
        </authorList>
    </citation>
    <scope>NUCLEOTIDE SEQUENCE [LARGE SCALE GENOMIC DNA]</scope>
    <source>
        <strain>ATCC 2001 / BCRC 20586 / JCM 3761 / NBRC 0622 / NRRL Y-65 / CBS 138</strain>
    </source>
</reference>